<evidence type="ECO:0000255" key="1">
    <source>
        <dbReference type="HAMAP-Rule" id="MF_00090"/>
    </source>
</evidence>
<reference key="1">
    <citation type="submission" date="2008-05" db="EMBL/GenBank/DDBJ databases">
        <title>Complete sequence of chromosome of Geobacter lovleyi SZ.</title>
        <authorList>
            <consortium name="US DOE Joint Genome Institute"/>
            <person name="Lucas S."/>
            <person name="Copeland A."/>
            <person name="Lapidus A."/>
            <person name="Glavina del Rio T."/>
            <person name="Dalin E."/>
            <person name="Tice H."/>
            <person name="Bruce D."/>
            <person name="Goodwin L."/>
            <person name="Pitluck S."/>
            <person name="Chertkov O."/>
            <person name="Meincke L."/>
            <person name="Brettin T."/>
            <person name="Detter J.C."/>
            <person name="Han C."/>
            <person name="Tapia R."/>
            <person name="Kuske C.R."/>
            <person name="Schmutz J."/>
            <person name="Larimer F."/>
            <person name="Land M."/>
            <person name="Hauser L."/>
            <person name="Kyrpides N."/>
            <person name="Mikhailova N."/>
            <person name="Sung Y."/>
            <person name="Fletcher K.E."/>
            <person name="Ritalahti K.M."/>
            <person name="Loeffler F.E."/>
            <person name="Richardson P."/>
        </authorList>
    </citation>
    <scope>NUCLEOTIDE SEQUENCE [LARGE SCALE GENOMIC DNA]</scope>
    <source>
        <strain>ATCC BAA-1151 / DSM 17278 / SZ</strain>
    </source>
</reference>
<sequence length="217" mass="23636">MVNFDIARKRMVQEQIVGRGITTPRLLEVFQKVPRHLFVQEAMAVQAYSDGPLPIGEKQTISQPYIVALMTDLLELTGNDHVLEIGTGSGYQTAILASLVRRVWTIERIRPLAMQARKVLDTLHLLNVNIKVGDGTLGWPEEGPFDAILVTAGAPAVPETLAAQLAPGGRLVIPVGDESNQTLLRIRKAADGTLTQETGIGCRFVPLIGQQGWQLNS</sequence>
<organism>
    <name type="scientific">Trichlorobacter lovleyi (strain ATCC BAA-1151 / DSM 17278 / SZ)</name>
    <name type="common">Geobacter lovleyi</name>
    <dbReference type="NCBI Taxonomy" id="398767"/>
    <lineage>
        <taxon>Bacteria</taxon>
        <taxon>Pseudomonadati</taxon>
        <taxon>Thermodesulfobacteriota</taxon>
        <taxon>Desulfuromonadia</taxon>
        <taxon>Geobacterales</taxon>
        <taxon>Geobacteraceae</taxon>
        <taxon>Trichlorobacter</taxon>
    </lineage>
</organism>
<gene>
    <name evidence="1" type="primary">pcm</name>
    <name type="ordered locus">Glov_1086</name>
</gene>
<dbReference type="EC" id="2.1.1.77" evidence="1"/>
<dbReference type="EMBL" id="CP001089">
    <property type="protein sequence ID" value="ACD94809.1"/>
    <property type="molecule type" value="Genomic_DNA"/>
</dbReference>
<dbReference type="SMR" id="B3E6I4"/>
<dbReference type="STRING" id="398767.Glov_1086"/>
<dbReference type="KEGG" id="glo:Glov_1086"/>
<dbReference type="eggNOG" id="COG2518">
    <property type="taxonomic scope" value="Bacteria"/>
</dbReference>
<dbReference type="HOGENOM" id="CLU_055432_2_0_7"/>
<dbReference type="OrthoDB" id="9810066at2"/>
<dbReference type="Proteomes" id="UP000002420">
    <property type="component" value="Chromosome"/>
</dbReference>
<dbReference type="GO" id="GO:0005737">
    <property type="term" value="C:cytoplasm"/>
    <property type="evidence" value="ECO:0007669"/>
    <property type="project" value="UniProtKB-SubCell"/>
</dbReference>
<dbReference type="GO" id="GO:0004719">
    <property type="term" value="F:protein-L-isoaspartate (D-aspartate) O-methyltransferase activity"/>
    <property type="evidence" value="ECO:0007669"/>
    <property type="project" value="UniProtKB-UniRule"/>
</dbReference>
<dbReference type="GO" id="GO:0032259">
    <property type="term" value="P:methylation"/>
    <property type="evidence" value="ECO:0007669"/>
    <property type="project" value="UniProtKB-KW"/>
</dbReference>
<dbReference type="GO" id="GO:0036211">
    <property type="term" value="P:protein modification process"/>
    <property type="evidence" value="ECO:0007669"/>
    <property type="project" value="UniProtKB-UniRule"/>
</dbReference>
<dbReference type="GO" id="GO:0030091">
    <property type="term" value="P:protein repair"/>
    <property type="evidence" value="ECO:0007669"/>
    <property type="project" value="UniProtKB-UniRule"/>
</dbReference>
<dbReference type="CDD" id="cd02440">
    <property type="entry name" value="AdoMet_MTases"/>
    <property type="match status" value="1"/>
</dbReference>
<dbReference type="FunFam" id="3.40.50.150:FF:000010">
    <property type="entry name" value="Protein-L-isoaspartate O-methyltransferase"/>
    <property type="match status" value="1"/>
</dbReference>
<dbReference type="Gene3D" id="3.40.50.150">
    <property type="entry name" value="Vaccinia Virus protein VP39"/>
    <property type="match status" value="1"/>
</dbReference>
<dbReference type="HAMAP" id="MF_00090">
    <property type="entry name" value="PIMT"/>
    <property type="match status" value="1"/>
</dbReference>
<dbReference type="InterPro" id="IPR000682">
    <property type="entry name" value="PCMT"/>
</dbReference>
<dbReference type="InterPro" id="IPR029063">
    <property type="entry name" value="SAM-dependent_MTases_sf"/>
</dbReference>
<dbReference type="NCBIfam" id="TIGR00080">
    <property type="entry name" value="pimt"/>
    <property type="match status" value="1"/>
</dbReference>
<dbReference type="NCBIfam" id="NF001453">
    <property type="entry name" value="PRK00312.1"/>
    <property type="match status" value="1"/>
</dbReference>
<dbReference type="PANTHER" id="PTHR11579">
    <property type="entry name" value="PROTEIN-L-ISOASPARTATE O-METHYLTRANSFERASE"/>
    <property type="match status" value="1"/>
</dbReference>
<dbReference type="PANTHER" id="PTHR11579:SF0">
    <property type="entry name" value="PROTEIN-L-ISOASPARTATE(D-ASPARTATE) O-METHYLTRANSFERASE"/>
    <property type="match status" value="1"/>
</dbReference>
<dbReference type="Pfam" id="PF01135">
    <property type="entry name" value="PCMT"/>
    <property type="match status" value="1"/>
</dbReference>
<dbReference type="SUPFAM" id="SSF53335">
    <property type="entry name" value="S-adenosyl-L-methionine-dependent methyltransferases"/>
    <property type="match status" value="1"/>
</dbReference>
<dbReference type="PROSITE" id="PS01279">
    <property type="entry name" value="PCMT"/>
    <property type="match status" value="1"/>
</dbReference>
<protein>
    <recommendedName>
        <fullName evidence="1">Protein-L-isoaspartate O-methyltransferase</fullName>
        <ecNumber evidence="1">2.1.1.77</ecNumber>
    </recommendedName>
    <alternativeName>
        <fullName evidence="1">L-isoaspartyl protein carboxyl methyltransferase</fullName>
    </alternativeName>
    <alternativeName>
        <fullName evidence="1">Protein L-isoaspartyl methyltransferase</fullName>
    </alternativeName>
    <alternativeName>
        <fullName evidence="1">Protein-beta-aspartate methyltransferase</fullName>
        <shortName evidence="1">PIMT</shortName>
    </alternativeName>
</protein>
<keyword id="KW-0963">Cytoplasm</keyword>
<keyword id="KW-0489">Methyltransferase</keyword>
<keyword id="KW-1185">Reference proteome</keyword>
<keyword id="KW-0949">S-adenosyl-L-methionine</keyword>
<keyword id="KW-0808">Transferase</keyword>
<name>PIMT_TRIL1</name>
<feature type="chain" id="PRO_0000351860" description="Protein-L-isoaspartate O-methyltransferase">
    <location>
        <begin position="1"/>
        <end position="217"/>
    </location>
</feature>
<feature type="active site" evidence="1">
    <location>
        <position position="62"/>
    </location>
</feature>
<accession>B3E6I4</accession>
<comment type="function">
    <text evidence="1">Catalyzes the methyl esterification of L-isoaspartyl residues in peptides and proteins that result from spontaneous decomposition of normal L-aspartyl and L-asparaginyl residues. It plays a role in the repair and/or degradation of damaged proteins.</text>
</comment>
<comment type="catalytic activity">
    <reaction evidence="1">
        <text>[protein]-L-isoaspartate + S-adenosyl-L-methionine = [protein]-L-isoaspartate alpha-methyl ester + S-adenosyl-L-homocysteine</text>
        <dbReference type="Rhea" id="RHEA:12705"/>
        <dbReference type="Rhea" id="RHEA-COMP:12143"/>
        <dbReference type="Rhea" id="RHEA-COMP:12144"/>
        <dbReference type="ChEBI" id="CHEBI:57856"/>
        <dbReference type="ChEBI" id="CHEBI:59789"/>
        <dbReference type="ChEBI" id="CHEBI:90596"/>
        <dbReference type="ChEBI" id="CHEBI:90598"/>
        <dbReference type="EC" id="2.1.1.77"/>
    </reaction>
</comment>
<comment type="subcellular location">
    <subcellularLocation>
        <location evidence="1">Cytoplasm</location>
    </subcellularLocation>
</comment>
<comment type="similarity">
    <text evidence="1">Belongs to the methyltransferase superfamily. L-isoaspartyl/D-aspartyl protein methyltransferase family.</text>
</comment>
<proteinExistence type="inferred from homology"/>